<protein>
    <recommendedName>
        <fullName>Receptor activity-modifying protein 3</fullName>
    </recommendedName>
    <alternativeName>
        <fullName>Calcitonin-receptor-like receptor activity-modifying protein 3</fullName>
        <shortName>CRLR activity-modifying protein 3</shortName>
    </alternativeName>
</protein>
<gene>
    <name evidence="8" type="primary">RAMP3</name>
</gene>
<reference key="1">
    <citation type="journal article" date="1998" name="Nature">
        <title>RAMPs regulate the transport and ligand specificity of the calcitonin-receptor-like receptor.</title>
        <authorList>
            <person name="McLatchie L.M."/>
            <person name="Fraser N.J."/>
            <person name="Main M.J."/>
            <person name="Wise A."/>
            <person name="Brown J."/>
            <person name="Thompson N."/>
            <person name="Solari R."/>
            <person name="Lee M.G."/>
            <person name="Foord S.M."/>
        </authorList>
    </citation>
    <scope>NUCLEOTIDE SEQUENCE [MRNA]</scope>
    <scope>FUNCTION</scope>
    <scope>TISSUE SPECIFICITY</scope>
    <source>
        <tissue>Brain</tissue>
    </source>
</reference>
<reference key="2">
    <citation type="submission" date="2003-03" db="EMBL/GenBank/DDBJ databases">
        <title>cDNA clones of human proteins involved in signal transduction sequenced by the Guthrie cDNA resource center (www.cdna.org).</title>
        <authorList>
            <person name="Kopatz S.A."/>
            <person name="Aronstam R.S."/>
            <person name="Sharma S.V."/>
        </authorList>
    </citation>
    <scope>NUCLEOTIDE SEQUENCE [LARGE SCALE MRNA]</scope>
</reference>
<reference key="3">
    <citation type="journal article" date="2003" name="Nature">
        <title>The DNA sequence of human chromosome 7.</title>
        <authorList>
            <person name="Hillier L.W."/>
            <person name="Fulton R.S."/>
            <person name="Fulton L.A."/>
            <person name="Graves T.A."/>
            <person name="Pepin K.H."/>
            <person name="Wagner-McPherson C."/>
            <person name="Layman D."/>
            <person name="Maas J."/>
            <person name="Jaeger S."/>
            <person name="Walker R."/>
            <person name="Wylie K."/>
            <person name="Sekhon M."/>
            <person name="Becker M.C."/>
            <person name="O'Laughlin M.D."/>
            <person name="Schaller M.E."/>
            <person name="Fewell G.A."/>
            <person name="Delehaunty K.D."/>
            <person name="Miner T.L."/>
            <person name="Nash W.E."/>
            <person name="Cordes M."/>
            <person name="Du H."/>
            <person name="Sun H."/>
            <person name="Edwards J."/>
            <person name="Bradshaw-Cordum H."/>
            <person name="Ali J."/>
            <person name="Andrews S."/>
            <person name="Isak A."/>
            <person name="Vanbrunt A."/>
            <person name="Nguyen C."/>
            <person name="Du F."/>
            <person name="Lamar B."/>
            <person name="Courtney L."/>
            <person name="Kalicki J."/>
            <person name="Ozersky P."/>
            <person name="Bielicki L."/>
            <person name="Scott K."/>
            <person name="Holmes A."/>
            <person name="Harkins R."/>
            <person name="Harris A."/>
            <person name="Strong C.M."/>
            <person name="Hou S."/>
            <person name="Tomlinson C."/>
            <person name="Dauphin-Kohlberg S."/>
            <person name="Kozlowicz-Reilly A."/>
            <person name="Leonard S."/>
            <person name="Rohlfing T."/>
            <person name="Rock S.M."/>
            <person name="Tin-Wollam A.-M."/>
            <person name="Abbott A."/>
            <person name="Minx P."/>
            <person name="Maupin R."/>
            <person name="Strowmatt C."/>
            <person name="Latreille P."/>
            <person name="Miller N."/>
            <person name="Johnson D."/>
            <person name="Murray J."/>
            <person name="Woessner J.P."/>
            <person name="Wendl M.C."/>
            <person name="Yang S.-P."/>
            <person name="Schultz B.R."/>
            <person name="Wallis J.W."/>
            <person name="Spieth J."/>
            <person name="Bieri T.A."/>
            <person name="Nelson J.O."/>
            <person name="Berkowicz N."/>
            <person name="Wohldmann P.E."/>
            <person name="Cook L.L."/>
            <person name="Hickenbotham M.T."/>
            <person name="Eldred J."/>
            <person name="Williams D."/>
            <person name="Bedell J.A."/>
            <person name="Mardis E.R."/>
            <person name="Clifton S.W."/>
            <person name="Chissoe S.L."/>
            <person name="Marra M.A."/>
            <person name="Raymond C."/>
            <person name="Haugen E."/>
            <person name="Gillett W."/>
            <person name="Zhou Y."/>
            <person name="James R."/>
            <person name="Phelps K."/>
            <person name="Iadanoto S."/>
            <person name="Bubb K."/>
            <person name="Simms E."/>
            <person name="Levy R."/>
            <person name="Clendenning J."/>
            <person name="Kaul R."/>
            <person name="Kent W.J."/>
            <person name="Furey T.S."/>
            <person name="Baertsch R.A."/>
            <person name="Brent M.R."/>
            <person name="Keibler E."/>
            <person name="Flicek P."/>
            <person name="Bork P."/>
            <person name="Suyama M."/>
            <person name="Bailey J.A."/>
            <person name="Portnoy M.E."/>
            <person name="Torrents D."/>
            <person name="Chinwalla A.T."/>
            <person name="Gish W.R."/>
            <person name="Eddy S.R."/>
            <person name="McPherson J.D."/>
            <person name="Olson M.V."/>
            <person name="Eichler E.E."/>
            <person name="Green E.D."/>
            <person name="Waterston R.H."/>
            <person name="Wilson R.K."/>
        </authorList>
    </citation>
    <scope>NUCLEOTIDE SEQUENCE [LARGE SCALE GENOMIC DNA]</scope>
</reference>
<reference key="4">
    <citation type="journal article" date="2004" name="Genome Res.">
        <title>The status, quality, and expansion of the NIH full-length cDNA project: the Mammalian Gene Collection (MGC).</title>
        <authorList>
            <consortium name="The MGC Project Team"/>
        </authorList>
    </citation>
    <scope>NUCLEOTIDE SEQUENCE [LARGE SCALE MRNA]</scope>
    <scope>VARIANT LEU-33</scope>
    <source>
        <tissue>Lung</tissue>
        <tissue>PNS</tissue>
    </source>
</reference>
<reference key="5">
    <citation type="journal article" date="2013" name="J. Mol. Endocrinol.">
        <title>G-protein-coupled receptor 30 interacts with receptor activity-modifying protein 3 and confers sex-dependent cardioprotection.</title>
        <authorList>
            <person name="Lenhart P.M."/>
            <person name="Broselid S."/>
            <person name="Barrick C.J."/>
            <person name="Leeb-Lundberg L.M."/>
            <person name="Caron K.M."/>
        </authorList>
    </citation>
    <scope>FUNCTION</scope>
    <scope>INTERACTION WITH GPER1</scope>
    <scope>SUBCELLULAR LOCATION</scope>
</reference>
<reference evidence="9 10" key="6">
    <citation type="journal article" date="2020" name="ACS Pharmacol. Transl. Sci.">
        <title>Structure and Dynamics of Adrenomedullin Receptors AM1 and AM2 Reveal Key Mechanisms in the Control of Receptor Phenotype by Receptor Activity-Modifying Proteins.</title>
        <authorList>
            <person name="Liang Y.L."/>
            <person name="Belousoff M.J."/>
            <person name="Fletcher M.M."/>
            <person name="Zhang X."/>
            <person name="Khoshouei M."/>
            <person name="Deganutti G."/>
            <person name="Koole C."/>
            <person name="Furness S.G.B."/>
            <person name="Miller L.J."/>
            <person name="Hay D.L."/>
            <person name="Christopoulos A."/>
            <person name="Reynolds C.A."/>
            <person name="Danev R."/>
            <person name="Wootten D."/>
            <person name="Sexton P.M."/>
        </authorList>
    </citation>
    <scope>STRUCTURE BY ELECTRON MICROSCOPY (2.30 ANGSTROMS) OF 24-148 IN COMPLEX WITH ADM; ADM2; CALCRL AND G PROTEINS</scope>
    <scope>DISULFIDE BOND</scope>
    <scope>FUNCTION</scope>
    <scope>INTERACTION WITH CALCRL</scope>
    <scope>SUBCELLULAR LOCATION</scope>
</reference>
<reference evidence="11" key="7">
    <citation type="journal article" date="2022" name="Science">
        <title>A structural basis for amylin receptor phenotype.</title>
        <authorList>
            <person name="Cao J."/>
            <person name="Belousoff M.J."/>
            <person name="Liang Y.L."/>
            <person name="Johnson R.M."/>
            <person name="Josephs T.M."/>
            <person name="Fletcher M.M."/>
            <person name="Christopoulos A."/>
            <person name="Hay D.L."/>
            <person name="Danev R."/>
            <person name="Wootten D."/>
            <person name="Sexton P.M."/>
        </authorList>
    </citation>
    <scope>STRUCTURE BY ELECTRON MICROSCOPY (2.40 ANGSTROMS) OF 24-148 IN COMPLEX WITH CALCR; IAPP AND G PROTEINS</scope>
    <scope>FUNCTION</scope>
    <scope>INTERACTION WITH CALCR</scope>
</reference>
<evidence type="ECO:0000255" key="1"/>
<evidence type="ECO:0000269" key="2">
    <source>
    </source>
</evidence>
<evidence type="ECO:0000269" key="3">
    <source>
    </source>
</evidence>
<evidence type="ECO:0000269" key="4">
    <source>
    </source>
</evidence>
<evidence type="ECO:0000269" key="5">
    <source>
    </source>
</evidence>
<evidence type="ECO:0000269" key="6">
    <source>
    </source>
</evidence>
<evidence type="ECO:0000305" key="7"/>
<evidence type="ECO:0000312" key="8">
    <source>
        <dbReference type="HGNC" id="HGNC:9845"/>
    </source>
</evidence>
<evidence type="ECO:0007744" key="9">
    <source>
        <dbReference type="PDB" id="6UUS"/>
    </source>
</evidence>
<evidence type="ECO:0007744" key="10">
    <source>
        <dbReference type="PDB" id="6UVA"/>
    </source>
</evidence>
<evidence type="ECO:0007744" key="11">
    <source>
        <dbReference type="PDB" id="7TZF"/>
    </source>
</evidence>
<evidence type="ECO:0007829" key="12">
    <source>
        <dbReference type="PDB" id="8F0K"/>
    </source>
</evidence>
<evidence type="ECO:0007829" key="13">
    <source>
        <dbReference type="PDB" id="8F2B"/>
    </source>
</evidence>
<proteinExistence type="evidence at protein level"/>
<organism>
    <name type="scientific">Homo sapiens</name>
    <name type="common">Human</name>
    <dbReference type="NCBI Taxonomy" id="9606"/>
    <lineage>
        <taxon>Eukaryota</taxon>
        <taxon>Metazoa</taxon>
        <taxon>Chordata</taxon>
        <taxon>Craniata</taxon>
        <taxon>Vertebrata</taxon>
        <taxon>Euteleostomi</taxon>
        <taxon>Mammalia</taxon>
        <taxon>Eutheria</taxon>
        <taxon>Euarchontoglires</taxon>
        <taxon>Primates</taxon>
        <taxon>Haplorrhini</taxon>
        <taxon>Catarrhini</taxon>
        <taxon>Hominidae</taxon>
        <taxon>Homo</taxon>
    </lineage>
</organism>
<keyword id="KW-0002">3D-structure</keyword>
<keyword id="KW-1003">Cell membrane</keyword>
<keyword id="KW-1015">Disulfide bond</keyword>
<keyword id="KW-0325">Glycoprotein</keyword>
<keyword id="KW-0472">Membrane</keyword>
<keyword id="KW-1267">Proteomics identification</keyword>
<keyword id="KW-0675">Receptor</keyword>
<keyword id="KW-1185">Reference proteome</keyword>
<keyword id="KW-0732">Signal</keyword>
<keyword id="KW-0812">Transmembrane</keyword>
<keyword id="KW-1133">Transmembrane helix</keyword>
<keyword id="KW-0813">Transport</keyword>
<feature type="signal peptide" evidence="1">
    <location>
        <begin position="1"/>
        <end position="23"/>
    </location>
</feature>
<feature type="chain" id="PRO_0000030176" description="Receptor activity-modifying protein 3">
    <location>
        <begin position="24"/>
        <end position="148"/>
    </location>
</feature>
<feature type="topological domain" description="Extracellular" evidence="1">
    <location>
        <begin position="24"/>
        <end position="113"/>
    </location>
</feature>
<feature type="transmembrane region" description="Helical" evidence="4 10">
    <location>
        <begin position="114"/>
        <end position="138"/>
    </location>
</feature>
<feature type="topological domain" description="Cytoplasmic" evidence="1">
    <location>
        <begin position="139"/>
        <end position="148"/>
    </location>
</feature>
<feature type="site" description="Required for CALCRL interaction" evidence="4">
    <location>
        <position position="113"/>
    </location>
</feature>
<feature type="site" description="Required for CALCRL interaction" evidence="4">
    <location>
        <position position="141"/>
    </location>
</feature>
<feature type="glycosylation site" description="N-linked (GlcNAc...) asparagine" evidence="1">
    <location>
        <position position="29"/>
    </location>
</feature>
<feature type="glycosylation site" description="N-linked (GlcNAc...) asparagine" evidence="1">
    <location>
        <position position="58"/>
    </location>
</feature>
<feature type="glycosylation site" description="N-linked (GlcNAc...) asparagine" evidence="1">
    <location>
        <position position="71"/>
    </location>
</feature>
<feature type="glycosylation site" description="N-linked (GlcNAc...) asparagine" evidence="1">
    <location>
        <position position="103"/>
    </location>
</feature>
<feature type="disulfide bond" evidence="4">
    <location>
        <begin position="40"/>
        <end position="72"/>
    </location>
</feature>
<feature type="disulfide bond" evidence="4">
    <location>
        <begin position="57"/>
        <end position="104"/>
    </location>
</feature>
<feature type="sequence variant" id="VAR_034437" description="In dbSNP:rs10272187.">
    <original>G</original>
    <variation>D</variation>
    <location>
        <position position="26"/>
    </location>
</feature>
<feature type="sequence variant" id="VAR_053628" description="In dbSNP:rs11550711." evidence="2">
    <original>M</original>
    <variation>L</variation>
    <location>
        <position position="33"/>
    </location>
</feature>
<feature type="sequence variant" id="VAR_024602" description="In dbSNP:rs2074654.">
    <original>W</original>
    <variation>R</variation>
    <location>
        <position position="56"/>
    </location>
</feature>
<feature type="helix" evidence="12">
    <location>
        <begin position="30"/>
        <end position="47"/>
    </location>
</feature>
<feature type="helix" evidence="12">
    <location>
        <begin position="53"/>
        <end position="56"/>
    </location>
</feature>
<feature type="helix" evidence="12">
    <location>
        <begin position="59"/>
        <end position="79"/>
    </location>
</feature>
<feature type="helix" evidence="12">
    <location>
        <begin position="87"/>
        <end position="100"/>
    </location>
</feature>
<feature type="strand" evidence="12">
    <location>
        <begin position="101"/>
        <end position="103"/>
    </location>
</feature>
<feature type="helix" evidence="12">
    <location>
        <begin position="116"/>
        <end position="119"/>
    </location>
</feature>
<feature type="helix" evidence="12">
    <location>
        <begin position="121"/>
        <end position="140"/>
    </location>
</feature>
<feature type="turn" evidence="13">
    <location>
        <begin position="141"/>
        <end position="143"/>
    </location>
</feature>
<comment type="function">
    <text evidence="3 4 5 6">Accessory protein that interacts with and modulates the function of G-protein coupled receptors including calcitonin gene-related peptide type 1 receptor (CALCRL), calcitonin receptor (CALCR) and G-protein coupled estrogen receptor 1 (GPER1) (PubMed:23674134, PubMed:9620797). Required for the transport of CALCRL and GPER1 receptors to the plasma membrane (PubMed:23674134, PubMed:9620797). Plays a role in cardioprotection by reducing cardiac hypertrophy and perivascular fibrosis in a GPER1-dependent manner (PubMed:23674134). Together with CALCRL, form a receptor complex for adrenomedullin/ADM and intermedin/ADM2 (PubMed:32296767). Together with CALCR, act as a receptor complex for amylin/IAPP (PubMed:35324283).</text>
</comment>
<comment type="subunit">
    <text evidence="3 4 5">Heterodimer of CALCRL and RAMP3; interaction induces allosteric modulation of CALCRL function and ligand specificity for adrenomedullin/ADM and intermedin/ADM2 (PubMed:32296767). Heterodimer of CALCR and RAMP3; interaction form the receptor complex AMYR3 for amylin/IAPP (PubMed:35324283). Interacts with GPER1 (PubMed:23674134).</text>
</comment>
<comment type="interaction">
    <interactant intactId="EBI-720447">
        <id>O60896</id>
    </interactant>
    <interactant intactId="EBI-3867333">
        <id>A8MQ03</id>
        <label>CYSRT1</label>
    </interactant>
    <organismsDiffer>false</organismsDiffer>
    <experiments>6</experiments>
</comment>
<comment type="interaction">
    <interactant intactId="EBI-720447">
        <id>O60896</id>
    </interactant>
    <interactant intactId="EBI-11974251">
        <id>Q6L8H2</id>
        <label>KRTAP5-3</label>
    </interactant>
    <organismsDiffer>false</organismsDiffer>
    <experiments>3</experiments>
</comment>
<comment type="interaction">
    <interactant intactId="EBI-720447">
        <id>O60896</id>
    </interactant>
    <interactant intactId="EBI-11987425">
        <id>Q6L8G8</id>
        <label>KRTAP5-7</label>
    </interactant>
    <organismsDiffer>false</organismsDiffer>
    <experiments>3</experiments>
</comment>
<comment type="interaction">
    <interactant intactId="EBI-720447">
        <id>O60896</id>
    </interactant>
    <interactant intactId="EBI-3958099">
        <id>P26371</id>
        <label>KRTAP5-9</label>
    </interactant>
    <organismsDiffer>false</organismsDiffer>
    <experiments>3</experiments>
</comment>
<comment type="interaction">
    <interactant intactId="EBI-720447">
        <id>O60896</id>
    </interactant>
    <interactant intactId="EBI-1043191">
        <id>Q9BYQ3</id>
        <label>KRTAP9-3</label>
    </interactant>
    <organismsDiffer>false</organismsDiffer>
    <experiments>3</experiments>
</comment>
<comment type="interaction">
    <interactant intactId="EBI-720447">
        <id>O60896</id>
    </interactant>
    <interactant intactId="EBI-945833">
        <id>Q7Z3S9</id>
        <label>NOTCH2NLA</label>
    </interactant>
    <organismsDiffer>false</organismsDiffer>
    <experiments>3</experiments>
</comment>
<comment type="interaction">
    <interactant intactId="EBI-720447">
        <id>O60896</id>
    </interactant>
    <interactant intactId="EBI-22310682">
        <id>P0DPK4</id>
        <label>NOTCH2NLC</label>
    </interactant>
    <organismsDiffer>false</organismsDiffer>
    <experiments>3</experiments>
</comment>
<comment type="subcellular location">
    <subcellularLocation>
        <location evidence="3 4">Cell membrane</location>
        <topology evidence="3 4">Single-pass type I membrane protein</topology>
    </subcellularLocation>
    <subcellularLocation>
        <location evidence="3">Membrane</location>
        <topology evidence="3">Single-pass type I membrane protein</topology>
    </subcellularLocation>
    <text>Moves from intracellular puncta to the plasma membrane in a RAMP3-dependent manner.</text>
</comment>
<comment type="tissue specificity">
    <text evidence="6">Strongly expressed in lung, breast, immune system and fetal tissues.</text>
</comment>
<comment type="similarity">
    <text evidence="7">Belongs to the RAMP family.</text>
</comment>
<accession>O60896</accession>
<accession>Q7Z2Y1</accession>
<sequence>METGALRRPQLLPLLLLLCGGCPRAGGCNETGMLERLPLCGKAFADMMGKVDVWKWCNLSEFIVYYESFTNCTEMEANVVGCYWPNPLAQGFITGIHRQFFSNCTVDRVHLEDPPDEVLIPLIVIPVVLTVAMAGLVVWRSKRTDTLL</sequence>
<name>RAMP3_HUMAN</name>
<dbReference type="EMBL" id="AJ001016">
    <property type="protein sequence ID" value="CAA04474.1"/>
    <property type="molecule type" value="mRNA"/>
</dbReference>
<dbReference type="EMBL" id="AY265459">
    <property type="protein sequence ID" value="AAP23300.1"/>
    <property type="molecule type" value="mRNA"/>
</dbReference>
<dbReference type="EMBL" id="AC004844">
    <property type="status" value="NOT_ANNOTATED_CDS"/>
    <property type="molecule type" value="Genomic_DNA"/>
</dbReference>
<dbReference type="EMBL" id="BC022304">
    <property type="protein sequence ID" value="AAH22304.1"/>
    <property type="molecule type" value="mRNA"/>
</dbReference>
<dbReference type="EMBL" id="BC053852">
    <property type="protein sequence ID" value="AAH53852.1"/>
    <property type="molecule type" value="mRNA"/>
</dbReference>
<dbReference type="CCDS" id="CCDS5503.1"/>
<dbReference type="RefSeq" id="NP_005847.1">
    <property type="nucleotide sequence ID" value="NM_005856.3"/>
</dbReference>
<dbReference type="PDB" id="6UUS">
    <property type="method" value="EM"/>
    <property type="resolution" value="2.40 A"/>
    <property type="chains" value="E=24-148"/>
</dbReference>
<dbReference type="PDB" id="6UVA">
    <property type="method" value="EM"/>
    <property type="resolution" value="2.30 A"/>
    <property type="chains" value="E=24-148"/>
</dbReference>
<dbReference type="PDB" id="7TZF">
    <property type="method" value="EM"/>
    <property type="resolution" value="2.40 A"/>
    <property type="chains" value="E=24-148"/>
</dbReference>
<dbReference type="PDB" id="8F0K">
    <property type="method" value="EM"/>
    <property type="resolution" value="1.90 A"/>
    <property type="chains" value="E=24-148"/>
</dbReference>
<dbReference type="PDB" id="8F2A">
    <property type="method" value="EM"/>
    <property type="resolution" value="2.20 A"/>
    <property type="chains" value="E=24-148"/>
</dbReference>
<dbReference type="PDB" id="8F2B">
    <property type="method" value="EM"/>
    <property type="resolution" value="2.00 A"/>
    <property type="chains" value="E=24-148"/>
</dbReference>
<dbReference type="PDBsum" id="6UUS"/>
<dbReference type="PDBsum" id="6UVA"/>
<dbReference type="PDBsum" id="7TZF"/>
<dbReference type="PDBsum" id="8F0K"/>
<dbReference type="PDBsum" id="8F2A"/>
<dbReference type="PDBsum" id="8F2B"/>
<dbReference type="EMDB" id="EMD-20901"/>
<dbReference type="EMDB" id="EMD-20906"/>
<dbReference type="EMDB" id="EMD-26208"/>
<dbReference type="EMDB" id="EMD-28759"/>
<dbReference type="EMDB" id="EMD-28810"/>
<dbReference type="EMDB" id="EMD-28812"/>
<dbReference type="SMR" id="O60896"/>
<dbReference type="BioGRID" id="115559">
    <property type="interactions" value="203"/>
</dbReference>
<dbReference type="ComplexPortal" id="CPX-3148">
    <property type="entry name" value="Adrenomedullin receptor AM2 complex"/>
</dbReference>
<dbReference type="ComplexPortal" id="CPX-3187">
    <property type="entry name" value="Amylin receptor 3 complex"/>
</dbReference>
<dbReference type="CORUM" id="O60896"/>
<dbReference type="FunCoup" id="O60896">
    <property type="interactions" value="136"/>
</dbReference>
<dbReference type="IntAct" id="O60896">
    <property type="interactions" value="169"/>
</dbReference>
<dbReference type="STRING" id="9606.ENSP00000242249"/>
<dbReference type="BindingDB" id="O60896"/>
<dbReference type="ChEMBL" id="CHEMBL2111190"/>
<dbReference type="ChEMBL" id="CHEMBL2111191"/>
<dbReference type="DrugBank" id="DB01278">
    <property type="generic name" value="Pramlintide"/>
</dbReference>
<dbReference type="DrugCentral" id="O60896"/>
<dbReference type="GuidetoPHARMACOLOGY" id="53"/>
<dbReference type="TCDB" id="8.A.127.1.3">
    <property type="family name" value="the receptor activity-modifying protein (ramp) family"/>
</dbReference>
<dbReference type="GlyCosmos" id="O60896">
    <property type="glycosylation" value="4 sites, No reported glycans"/>
</dbReference>
<dbReference type="GlyGen" id="O60896">
    <property type="glycosylation" value="4 sites, 4 N-linked glycans (1 site)"/>
</dbReference>
<dbReference type="PhosphoSitePlus" id="O60896"/>
<dbReference type="BioMuta" id="RAMP3"/>
<dbReference type="MassIVE" id="O60896"/>
<dbReference type="PaxDb" id="9606-ENSP00000242249"/>
<dbReference type="PeptideAtlas" id="O60896"/>
<dbReference type="ProteomicsDB" id="49659"/>
<dbReference type="Antibodypedia" id="27450">
    <property type="antibodies" value="214 antibodies from 33 providers"/>
</dbReference>
<dbReference type="DNASU" id="10268"/>
<dbReference type="Ensembl" id="ENST00000242249.8">
    <property type="protein sequence ID" value="ENSP00000242249.4"/>
    <property type="gene ID" value="ENSG00000122679.8"/>
</dbReference>
<dbReference type="Ensembl" id="ENST00000481345.1">
    <property type="protein sequence ID" value="ENSP00000419012.1"/>
    <property type="gene ID" value="ENSG00000122679.8"/>
</dbReference>
<dbReference type="GeneID" id="10268"/>
<dbReference type="KEGG" id="hsa:10268"/>
<dbReference type="MANE-Select" id="ENST00000242249.8">
    <property type="protein sequence ID" value="ENSP00000242249.4"/>
    <property type="RefSeq nucleotide sequence ID" value="NM_005856.3"/>
    <property type="RefSeq protein sequence ID" value="NP_005847.1"/>
</dbReference>
<dbReference type="UCSC" id="uc003tnb.4">
    <property type="organism name" value="human"/>
</dbReference>
<dbReference type="AGR" id="HGNC:9845"/>
<dbReference type="CTD" id="10268"/>
<dbReference type="DisGeNET" id="10268"/>
<dbReference type="GeneCards" id="RAMP3"/>
<dbReference type="HGNC" id="HGNC:9845">
    <property type="gene designation" value="RAMP3"/>
</dbReference>
<dbReference type="HPA" id="ENSG00000122679">
    <property type="expression patterns" value="Low tissue specificity"/>
</dbReference>
<dbReference type="MIM" id="605155">
    <property type="type" value="gene"/>
</dbReference>
<dbReference type="neXtProt" id="NX_O60896"/>
<dbReference type="OpenTargets" id="ENSG00000122679"/>
<dbReference type="PharmGKB" id="PA34204"/>
<dbReference type="VEuPathDB" id="HostDB:ENSG00000122679"/>
<dbReference type="eggNOG" id="ENOG502S3C2">
    <property type="taxonomic scope" value="Eukaryota"/>
</dbReference>
<dbReference type="GeneTree" id="ENSGT00940000161026"/>
<dbReference type="InParanoid" id="O60896"/>
<dbReference type="OMA" id="VAVWKWC"/>
<dbReference type="OrthoDB" id="9940331at2759"/>
<dbReference type="PAN-GO" id="O60896">
    <property type="GO annotations" value="9 GO annotations based on evolutionary models"/>
</dbReference>
<dbReference type="PhylomeDB" id="O60896"/>
<dbReference type="TreeFam" id="TF333286"/>
<dbReference type="PathwayCommons" id="O60896"/>
<dbReference type="Reactome" id="R-HSA-418555">
    <property type="pathway name" value="G alpha (s) signalling events"/>
</dbReference>
<dbReference type="Reactome" id="R-HSA-419812">
    <property type="pathway name" value="Calcitonin-like ligand receptors"/>
</dbReference>
<dbReference type="SignaLink" id="O60896"/>
<dbReference type="BioGRID-ORCS" id="10268">
    <property type="hits" value="4 hits in 1154 CRISPR screens"/>
</dbReference>
<dbReference type="ChiTaRS" id="RAMP3">
    <property type="organism name" value="human"/>
</dbReference>
<dbReference type="GeneWiki" id="RAMP3"/>
<dbReference type="GenomeRNAi" id="10268"/>
<dbReference type="Pharos" id="O60896">
    <property type="development level" value="Tclin"/>
</dbReference>
<dbReference type="PRO" id="PR:O60896"/>
<dbReference type="Proteomes" id="UP000005640">
    <property type="component" value="Chromosome 7"/>
</dbReference>
<dbReference type="RNAct" id="O60896">
    <property type="molecule type" value="protein"/>
</dbReference>
<dbReference type="Bgee" id="ENSG00000122679">
    <property type="expression patterns" value="Expressed in right lung and 141 other cell types or tissues"/>
</dbReference>
<dbReference type="ExpressionAtlas" id="O60896">
    <property type="expression patterns" value="baseline and differential"/>
</dbReference>
<dbReference type="GO" id="GO:1903143">
    <property type="term" value="C:adrenomedullin receptor complex"/>
    <property type="evidence" value="ECO:0000314"/>
    <property type="project" value="UniProtKB"/>
</dbReference>
<dbReference type="GO" id="GO:0150058">
    <property type="term" value="C:amylin receptor complex 3"/>
    <property type="evidence" value="ECO:0000314"/>
    <property type="project" value="ARUK-UCL"/>
</dbReference>
<dbReference type="GO" id="GO:0009986">
    <property type="term" value="C:cell surface"/>
    <property type="evidence" value="ECO:0000314"/>
    <property type="project" value="UniProtKB"/>
</dbReference>
<dbReference type="GO" id="GO:0005764">
    <property type="term" value="C:lysosome"/>
    <property type="evidence" value="ECO:0000304"/>
    <property type="project" value="ProtInc"/>
</dbReference>
<dbReference type="GO" id="GO:0005886">
    <property type="term" value="C:plasma membrane"/>
    <property type="evidence" value="ECO:0000314"/>
    <property type="project" value="UniProtKB"/>
</dbReference>
<dbReference type="GO" id="GO:0043235">
    <property type="term" value="C:receptor complex"/>
    <property type="evidence" value="ECO:0000314"/>
    <property type="project" value="UniProtKB"/>
</dbReference>
<dbReference type="GO" id="GO:0001605">
    <property type="term" value="F:adrenomedullin receptor activity"/>
    <property type="evidence" value="ECO:0000353"/>
    <property type="project" value="UniProtKB"/>
</dbReference>
<dbReference type="GO" id="GO:0097643">
    <property type="term" value="F:amylin receptor activity"/>
    <property type="evidence" value="ECO:0000316"/>
    <property type="project" value="ARUK-UCL"/>
</dbReference>
<dbReference type="GO" id="GO:0001540">
    <property type="term" value="F:amyloid-beta binding"/>
    <property type="evidence" value="ECO:0000305"/>
    <property type="project" value="ARUK-UCL"/>
</dbReference>
<dbReference type="GO" id="GO:0015026">
    <property type="term" value="F:coreceptor activity"/>
    <property type="evidence" value="ECO:0000314"/>
    <property type="project" value="UniProt"/>
</dbReference>
<dbReference type="GO" id="GO:0007189">
    <property type="term" value="P:adenylate cyclase-activating G protein-coupled receptor signaling pathway"/>
    <property type="evidence" value="ECO:0000316"/>
    <property type="project" value="ARUK-UCL"/>
</dbReference>
<dbReference type="GO" id="GO:1990410">
    <property type="term" value="P:adrenomedullin receptor signaling pathway"/>
    <property type="evidence" value="ECO:0000314"/>
    <property type="project" value="UniProt"/>
</dbReference>
<dbReference type="GO" id="GO:0150061">
    <property type="term" value="P:amylin receptor 3 signaling pathway"/>
    <property type="evidence" value="ECO:0000314"/>
    <property type="project" value="UniProt"/>
</dbReference>
<dbReference type="GO" id="GO:0097647">
    <property type="term" value="P:amylin receptor signaling pathway"/>
    <property type="evidence" value="ECO:0000316"/>
    <property type="project" value="ARUK-UCL"/>
</dbReference>
<dbReference type="GO" id="GO:0006816">
    <property type="term" value="P:calcium ion transport"/>
    <property type="evidence" value="ECO:0000314"/>
    <property type="project" value="UniProtKB"/>
</dbReference>
<dbReference type="GO" id="GO:0071392">
    <property type="term" value="P:cellular response to estradiol stimulus"/>
    <property type="evidence" value="ECO:0000250"/>
    <property type="project" value="UniProtKB"/>
</dbReference>
<dbReference type="GO" id="GO:0032870">
    <property type="term" value="P:cellular response to hormone stimulus"/>
    <property type="evidence" value="ECO:0000318"/>
    <property type="project" value="GO_Central"/>
</dbReference>
<dbReference type="GO" id="GO:0038041">
    <property type="term" value="P:cross-receptor inhibition within G protein-coupled receptor heterodimer"/>
    <property type="evidence" value="ECO:0000353"/>
    <property type="project" value="UniProtKB"/>
</dbReference>
<dbReference type="GO" id="GO:0007186">
    <property type="term" value="P:G protein-coupled receptor signaling pathway"/>
    <property type="evidence" value="ECO:0000318"/>
    <property type="project" value="GO_Central"/>
</dbReference>
<dbReference type="GO" id="GO:0086103">
    <property type="term" value="P:G protein-coupled receptor signaling pathway involved in heart process"/>
    <property type="evidence" value="ECO:0000250"/>
    <property type="project" value="UniProtKB"/>
</dbReference>
<dbReference type="GO" id="GO:0006886">
    <property type="term" value="P:intracellular protein transport"/>
    <property type="evidence" value="ECO:0007669"/>
    <property type="project" value="InterPro"/>
</dbReference>
<dbReference type="GO" id="GO:0050850">
    <property type="term" value="P:positive regulation of calcium-mediated signaling"/>
    <property type="evidence" value="ECO:0000316"/>
    <property type="project" value="ARUK-UCL"/>
</dbReference>
<dbReference type="GO" id="GO:0141163">
    <property type="term" value="P:positive regulation of cAMP/PKA signal transduction"/>
    <property type="evidence" value="ECO:0000316"/>
    <property type="project" value="ARUK-UCL"/>
</dbReference>
<dbReference type="GO" id="GO:0070374">
    <property type="term" value="P:positive regulation of ERK1 and ERK2 cascade"/>
    <property type="evidence" value="ECO:0000316"/>
    <property type="project" value="ARUK-UCL"/>
</dbReference>
<dbReference type="GO" id="GO:0010628">
    <property type="term" value="P:positive regulation of gene expression"/>
    <property type="evidence" value="ECO:0000316"/>
    <property type="project" value="ARUK-UCL"/>
</dbReference>
<dbReference type="GO" id="GO:0051897">
    <property type="term" value="P:positive regulation of phosphatidylinositol 3-kinase/protein kinase B signal transduction"/>
    <property type="evidence" value="ECO:0000316"/>
    <property type="project" value="ARUK-UCL"/>
</dbReference>
<dbReference type="GO" id="GO:1903078">
    <property type="term" value="P:positive regulation of protein localization to plasma membrane"/>
    <property type="evidence" value="ECO:0000314"/>
    <property type="project" value="UniProtKB"/>
</dbReference>
<dbReference type="GO" id="GO:0001921">
    <property type="term" value="P:positive regulation of receptor recycling"/>
    <property type="evidence" value="ECO:0000314"/>
    <property type="project" value="UniProtKB"/>
</dbReference>
<dbReference type="GO" id="GO:0072659">
    <property type="term" value="P:protein localization to plasma membrane"/>
    <property type="evidence" value="ECO:0000314"/>
    <property type="project" value="UniProtKB"/>
</dbReference>
<dbReference type="GO" id="GO:0015031">
    <property type="term" value="P:protein transport"/>
    <property type="evidence" value="ECO:0000314"/>
    <property type="project" value="UniProtKB"/>
</dbReference>
<dbReference type="GO" id="GO:0031623">
    <property type="term" value="P:receptor internalization"/>
    <property type="evidence" value="ECO:0000314"/>
    <property type="project" value="UniProtKB"/>
</dbReference>
<dbReference type="GO" id="GO:1904645">
    <property type="term" value="P:response to amyloid-beta"/>
    <property type="evidence" value="ECO:0000316"/>
    <property type="project" value="ARUK-UCL"/>
</dbReference>
<dbReference type="FunFam" id="1.10.150.510:FF:000001">
    <property type="entry name" value="Receptor activity modifying protein 3"/>
    <property type="match status" value="1"/>
</dbReference>
<dbReference type="Gene3D" id="1.10.150.510">
    <property type="entry name" value="Receptor activity modifying family"/>
    <property type="match status" value="1"/>
</dbReference>
<dbReference type="InterPro" id="IPR006985">
    <property type="entry name" value="RAMP"/>
</dbReference>
<dbReference type="InterPro" id="IPR038126">
    <property type="entry name" value="RAMP_sf"/>
</dbReference>
<dbReference type="PANTHER" id="PTHR14076">
    <property type="entry name" value="RECEPTOR ACTIVITY MODIFYING PROTEIN RAMP"/>
    <property type="match status" value="1"/>
</dbReference>
<dbReference type="PANTHER" id="PTHR14076:SF2">
    <property type="entry name" value="RECEPTOR ACTIVITY-MODIFYING PROTEIN 3"/>
    <property type="match status" value="1"/>
</dbReference>
<dbReference type="Pfam" id="PF04901">
    <property type="entry name" value="RAMP"/>
    <property type="match status" value="1"/>
</dbReference>